<dbReference type="GO" id="GO:0005576">
    <property type="term" value="C:extracellular region"/>
    <property type="evidence" value="ECO:0007669"/>
    <property type="project" value="UniProtKB-SubCell"/>
</dbReference>
<dbReference type="GO" id="GO:0007218">
    <property type="term" value="P:neuropeptide signaling pathway"/>
    <property type="evidence" value="ECO:0007669"/>
    <property type="project" value="UniProtKB-KW"/>
</dbReference>
<dbReference type="InterPro" id="IPR013231">
    <property type="entry name" value="Periviscerokinin"/>
</dbReference>
<dbReference type="Pfam" id="PF08259">
    <property type="entry name" value="Periviscerokin"/>
    <property type="match status" value="1"/>
</dbReference>
<sequence>GGSSGLISMPRV</sequence>
<feature type="peptide" id="PRO_0000378824" description="Periviscerokinin-3" evidence="2">
    <location>
        <begin position="1"/>
        <end position="12"/>
    </location>
</feature>
<feature type="modified residue" description="Valine amide" evidence="2">
    <location>
        <position position="12"/>
    </location>
</feature>
<reference evidence="4" key="1">
    <citation type="journal article" date="2009" name="BMC Evol. Biol.">
        <title>A proteomic approach for studying insect phylogeny: CAPA peptides of ancient insect taxa (Dictyoptera, Blattoptera) as a test case.</title>
        <authorList>
            <person name="Roth S."/>
            <person name="Fromm B."/>
            <person name="Gaede G."/>
            <person name="Predel R."/>
        </authorList>
    </citation>
    <scope>PROTEIN SEQUENCE</scope>
    <scope>AMIDATION AT VAL-12</scope>
    <source>
        <tissue evidence="2">Abdominal perisympathetic organs</tissue>
    </source>
</reference>
<organism>
    <name type="scientific">Deropeltis atra</name>
    <name type="common">Cockroach</name>
    <dbReference type="NCBI Taxonomy" id="596120"/>
    <lineage>
        <taxon>Eukaryota</taxon>
        <taxon>Metazoa</taxon>
        <taxon>Ecdysozoa</taxon>
        <taxon>Arthropoda</taxon>
        <taxon>Hexapoda</taxon>
        <taxon>Insecta</taxon>
        <taxon>Pterygota</taxon>
        <taxon>Neoptera</taxon>
        <taxon>Polyneoptera</taxon>
        <taxon>Dictyoptera</taxon>
        <taxon>Blattodea</taxon>
        <taxon>Blattoidea</taxon>
        <taxon>Blattidae</taxon>
        <taxon>Blattinae</taxon>
        <taxon>Deropeltis</taxon>
    </lineage>
</organism>
<name>PVK3_DERAT</name>
<accession>P85595</accession>
<comment type="function">
    <text evidence="4">Mediates visceral muscle contractile activity (myotropic activity).</text>
</comment>
<comment type="subcellular location">
    <subcellularLocation>
        <location evidence="4">Secreted</location>
    </subcellularLocation>
</comment>
<comment type="similarity">
    <text evidence="1">Belongs to the periviscerokinin family.</text>
</comment>
<protein>
    <recommendedName>
        <fullName evidence="3">Periviscerokinin-3</fullName>
        <shortName evidence="3">DerAt-PVK-3</shortName>
    </recommendedName>
</protein>
<keyword id="KW-0027">Amidation</keyword>
<keyword id="KW-0903">Direct protein sequencing</keyword>
<keyword id="KW-0527">Neuropeptide</keyword>
<keyword id="KW-0964">Secreted</keyword>
<evidence type="ECO:0000255" key="1"/>
<evidence type="ECO:0000269" key="2">
    <source>
    </source>
</evidence>
<evidence type="ECO:0000303" key="3">
    <source>
    </source>
</evidence>
<evidence type="ECO:0000305" key="4"/>
<proteinExistence type="evidence at protein level"/>